<comment type="function">
    <text evidence="1">Catalyzes the 2-thiolation of uridine at the wobble position (U34) of tRNA, leading to the formation of s(2)U34.</text>
</comment>
<comment type="catalytic activity">
    <reaction evidence="1">
        <text>S-sulfanyl-L-cysteinyl-[protein] + uridine(34) in tRNA + AH2 + ATP = 2-thiouridine(34) in tRNA + L-cysteinyl-[protein] + A + AMP + diphosphate + H(+)</text>
        <dbReference type="Rhea" id="RHEA:47032"/>
        <dbReference type="Rhea" id="RHEA-COMP:10131"/>
        <dbReference type="Rhea" id="RHEA-COMP:11726"/>
        <dbReference type="Rhea" id="RHEA-COMP:11727"/>
        <dbReference type="Rhea" id="RHEA-COMP:11728"/>
        <dbReference type="ChEBI" id="CHEBI:13193"/>
        <dbReference type="ChEBI" id="CHEBI:15378"/>
        <dbReference type="ChEBI" id="CHEBI:17499"/>
        <dbReference type="ChEBI" id="CHEBI:29950"/>
        <dbReference type="ChEBI" id="CHEBI:30616"/>
        <dbReference type="ChEBI" id="CHEBI:33019"/>
        <dbReference type="ChEBI" id="CHEBI:61963"/>
        <dbReference type="ChEBI" id="CHEBI:65315"/>
        <dbReference type="ChEBI" id="CHEBI:87170"/>
        <dbReference type="ChEBI" id="CHEBI:456215"/>
        <dbReference type="EC" id="2.8.1.13"/>
    </reaction>
</comment>
<comment type="subcellular location">
    <subcellularLocation>
        <location evidence="1">Cytoplasm</location>
    </subcellularLocation>
</comment>
<comment type="similarity">
    <text evidence="1">Belongs to the MnmA/TRMU family.</text>
</comment>
<feature type="chain" id="PRO_1000009534" description="tRNA-specific 2-thiouridylase MnmA">
    <location>
        <begin position="1"/>
        <end position="396"/>
    </location>
</feature>
<feature type="region of interest" description="Interaction with target base in tRNA" evidence="1">
    <location>
        <begin position="97"/>
        <end position="99"/>
    </location>
</feature>
<feature type="region of interest" description="Interaction with tRNA" evidence="1">
    <location>
        <begin position="175"/>
        <end position="177"/>
    </location>
</feature>
<feature type="region of interest" description="Interaction with tRNA" evidence="1">
    <location>
        <begin position="343"/>
        <end position="344"/>
    </location>
</feature>
<feature type="active site" description="Nucleophile" evidence="1">
    <location>
        <position position="102"/>
    </location>
</feature>
<feature type="active site" description="Cysteine persulfide intermediate" evidence="1">
    <location>
        <position position="225"/>
    </location>
</feature>
<feature type="binding site" evidence="1">
    <location>
        <begin position="11"/>
        <end position="18"/>
    </location>
    <ligand>
        <name>ATP</name>
        <dbReference type="ChEBI" id="CHEBI:30616"/>
    </ligand>
</feature>
<feature type="binding site" evidence="1">
    <location>
        <position position="37"/>
    </location>
    <ligand>
        <name>ATP</name>
        <dbReference type="ChEBI" id="CHEBI:30616"/>
    </ligand>
</feature>
<feature type="binding site" evidence="1">
    <location>
        <position position="126"/>
    </location>
    <ligand>
        <name>ATP</name>
        <dbReference type="ChEBI" id="CHEBI:30616"/>
    </ligand>
</feature>
<feature type="site" description="Interaction with tRNA" evidence="1">
    <location>
        <position position="127"/>
    </location>
</feature>
<feature type="site" description="Interaction with tRNA" evidence="1">
    <location>
        <position position="376"/>
    </location>
</feature>
<feature type="disulfide bond" description="Alternate" evidence="1">
    <location>
        <begin position="102"/>
        <end position="225"/>
    </location>
</feature>
<gene>
    <name evidence="1" type="primary">mnmA</name>
    <name type="synonym">trmU</name>
    <name type="ordered locus">Mpe_A3566</name>
</gene>
<sequence length="396" mass="43070">MSAKKERVVVGLSGGVDSAVSAWLLKQQGHEVVGLFMKNWEDDDDDEYCSSRQDFLDAASVADVIGIEIEHVNFAAEYRDRVFAEFLREYEAGRTPNPDVLCNAEIKFKAFLDHALRLGAGKIATGHYARVRRAPALPGMPDGPLDESSAGALDRARVREAGGRFELLKGLDASKDQSYFLHRLSQAQLARTLFPVGELPKTEVRRIAAEIRLPVAAKKDSTGICFIGERPFREFLNRYLAHAPGPIKDERGRTLGEHVGLSFYTLGQRKGIGIGGVKERGAARGGADHAPWFVARKDRPHNTLYVVQGHDHPWLQSFRLEADDASWIAGTPPAPGALAAKTRYRQADASCVLAPGADGRFRLDFGVPQWAVTPGQSAVLYDGEVCLGGGVIAAAA</sequence>
<evidence type="ECO:0000255" key="1">
    <source>
        <dbReference type="HAMAP-Rule" id="MF_00144"/>
    </source>
</evidence>
<proteinExistence type="inferred from homology"/>
<reference key="1">
    <citation type="journal article" date="2007" name="J. Bacteriol.">
        <title>Whole-genome analysis of the methyl tert-butyl ether-degrading beta-proteobacterium Methylibium petroleiphilum PM1.</title>
        <authorList>
            <person name="Kane S.R."/>
            <person name="Chakicherla A.Y."/>
            <person name="Chain P.S.G."/>
            <person name="Schmidt R."/>
            <person name="Shin M.W."/>
            <person name="Legler T.C."/>
            <person name="Scow K.M."/>
            <person name="Larimer F.W."/>
            <person name="Lucas S.M."/>
            <person name="Richardson P.M."/>
            <person name="Hristova K.R."/>
        </authorList>
    </citation>
    <scope>NUCLEOTIDE SEQUENCE [LARGE SCALE GENOMIC DNA]</scope>
    <source>
        <strain>ATCC BAA-1232 / LMG 22953 / PM1</strain>
    </source>
</reference>
<accession>A2SLT0</accession>
<keyword id="KW-0067">ATP-binding</keyword>
<keyword id="KW-0963">Cytoplasm</keyword>
<keyword id="KW-1015">Disulfide bond</keyword>
<keyword id="KW-0547">Nucleotide-binding</keyword>
<keyword id="KW-1185">Reference proteome</keyword>
<keyword id="KW-0694">RNA-binding</keyword>
<keyword id="KW-0808">Transferase</keyword>
<keyword id="KW-0819">tRNA processing</keyword>
<keyword id="KW-0820">tRNA-binding</keyword>
<protein>
    <recommendedName>
        <fullName evidence="1">tRNA-specific 2-thiouridylase MnmA</fullName>
        <ecNumber evidence="1">2.8.1.13</ecNumber>
    </recommendedName>
</protein>
<organism>
    <name type="scientific">Methylibium petroleiphilum (strain ATCC BAA-1232 / LMG 22953 / PM1)</name>
    <dbReference type="NCBI Taxonomy" id="420662"/>
    <lineage>
        <taxon>Bacteria</taxon>
        <taxon>Pseudomonadati</taxon>
        <taxon>Pseudomonadota</taxon>
        <taxon>Betaproteobacteria</taxon>
        <taxon>Burkholderiales</taxon>
        <taxon>Sphaerotilaceae</taxon>
        <taxon>Methylibium</taxon>
    </lineage>
</organism>
<name>MNMA_METPP</name>
<dbReference type="EC" id="2.8.1.13" evidence="1"/>
<dbReference type="EMBL" id="CP000555">
    <property type="protein sequence ID" value="ABM96519.1"/>
    <property type="molecule type" value="Genomic_DNA"/>
</dbReference>
<dbReference type="RefSeq" id="WP_011831139.1">
    <property type="nucleotide sequence ID" value="NC_008825.1"/>
</dbReference>
<dbReference type="SMR" id="A2SLT0"/>
<dbReference type="STRING" id="420662.Mpe_A3566"/>
<dbReference type="KEGG" id="mpt:Mpe_A3566"/>
<dbReference type="eggNOG" id="COG0482">
    <property type="taxonomic scope" value="Bacteria"/>
</dbReference>
<dbReference type="HOGENOM" id="CLU_035188_1_0_4"/>
<dbReference type="Proteomes" id="UP000000366">
    <property type="component" value="Chromosome"/>
</dbReference>
<dbReference type="GO" id="GO:0005737">
    <property type="term" value="C:cytoplasm"/>
    <property type="evidence" value="ECO:0007669"/>
    <property type="project" value="UniProtKB-SubCell"/>
</dbReference>
<dbReference type="GO" id="GO:0005524">
    <property type="term" value="F:ATP binding"/>
    <property type="evidence" value="ECO:0007669"/>
    <property type="project" value="UniProtKB-KW"/>
</dbReference>
<dbReference type="GO" id="GO:0000049">
    <property type="term" value="F:tRNA binding"/>
    <property type="evidence" value="ECO:0007669"/>
    <property type="project" value="UniProtKB-KW"/>
</dbReference>
<dbReference type="GO" id="GO:0103016">
    <property type="term" value="F:tRNA-uridine 2-sulfurtransferase activity"/>
    <property type="evidence" value="ECO:0007669"/>
    <property type="project" value="UniProtKB-EC"/>
</dbReference>
<dbReference type="GO" id="GO:0002143">
    <property type="term" value="P:tRNA wobble position uridine thiolation"/>
    <property type="evidence" value="ECO:0007669"/>
    <property type="project" value="TreeGrafter"/>
</dbReference>
<dbReference type="CDD" id="cd01998">
    <property type="entry name" value="MnmA_TRMU-like"/>
    <property type="match status" value="1"/>
</dbReference>
<dbReference type="FunFam" id="3.40.50.620:FF:000104">
    <property type="entry name" value="Mitochondrial tRNA-specific 2-thiouridylase 1"/>
    <property type="match status" value="1"/>
</dbReference>
<dbReference type="FunFam" id="2.30.30.280:FF:000001">
    <property type="entry name" value="tRNA-specific 2-thiouridylase MnmA"/>
    <property type="match status" value="1"/>
</dbReference>
<dbReference type="FunFam" id="2.40.30.10:FF:000023">
    <property type="entry name" value="tRNA-specific 2-thiouridylase MnmA"/>
    <property type="match status" value="1"/>
</dbReference>
<dbReference type="Gene3D" id="2.30.30.280">
    <property type="entry name" value="Adenine nucleotide alpha hydrolases-like domains"/>
    <property type="match status" value="1"/>
</dbReference>
<dbReference type="Gene3D" id="3.40.50.620">
    <property type="entry name" value="HUPs"/>
    <property type="match status" value="1"/>
</dbReference>
<dbReference type="Gene3D" id="2.40.30.10">
    <property type="entry name" value="Translation factors"/>
    <property type="match status" value="1"/>
</dbReference>
<dbReference type="HAMAP" id="MF_00144">
    <property type="entry name" value="tRNA_thiouridyl_MnmA"/>
    <property type="match status" value="1"/>
</dbReference>
<dbReference type="InterPro" id="IPR004506">
    <property type="entry name" value="MnmA-like"/>
</dbReference>
<dbReference type="InterPro" id="IPR046885">
    <property type="entry name" value="MnmA-like_C"/>
</dbReference>
<dbReference type="InterPro" id="IPR046884">
    <property type="entry name" value="MnmA-like_central"/>
</dbReference>
<dbReference type="InterPro" id="IPR023382">
    <property type="entry name" value="MnmA-like_central_sf"/>
</dbReference>
<dbReference type="InterPro" id="IPR014729">
    <property type="entry name" value="Rossmann-like_a/b/a_fold"/>
</dbReference>
<dbReference type="PANTHER" id="PTHR11933:SF5">
    <property type="entry name" value="MITOCHONDRIAL TRNA-SPECIFIC 2-THIOURIDYLASE 1"/>
    <property type="match status" value="1"/>
</dbReference>
<dbReference type="PANTHER" id="PTHR11933">
    <property type="entry name" value="TRNA 5-METHYLAMINOMETHYL-2-THIOURIDYLATE -METHYLTRANSFERASE"/>
    <property type="match status" value="1"/>
</dbReference>
<dbReference type="Pfam" id="PF03054">
    <property type="entry name" value="tRNA_Me_trans"/>
    <property type="match status" value="1"/>
</dbReference>
<dbReference type="Pfam" id="PF20258">
    <property type="entry name" value="tRNA_Me_trans_C"/>
    <property type="match status" value="1"/>
</dbReference>
<dbReference type="Pfam" id="PF20259">
    <property type="entry name" value="tRNA_Me_trans_M"/>
    <property type="match status" value="1"/>
</dbReference>
<dbReference type="SUPFAM" id="SSF52402">
    <property type="entry name" value="Adenine nucleotide alpha hydrolases-like"/>
    <property type="match status" value="1"/>
</dbReference>